<reference key="1">
    <citation type="journal article" date="2003" name="Nature">
        <title>Unique physiological and pathogenic features of Leptospira interrogans revealed by whole-genome sequencing.</title>
        <authorList>
            <person name="Ren S.-X."/>
            <person name="Fu G."/>
            <person name="Jiang X.-G."/>
            <person name="Zeng R."/>
            <person name="Miao Y.-G."/>
            <person name="Xu H."/>
            <person name="Zhang Y.-X."/>
            <person name="Xiong H."/>
            <person name="Lu G."/>
            <person name="Lu L.-F."/>
            <person name="Jiang H.-Q."/>
            <person name="Jia J."/>
            <person name="Tu Y.-F."/>
            <person name="Jiang J.-X."/>
            <person name="Gu W.-Y."/>
            <person name="Zhang Y.-Q."/>
            <person name="Cai Z."/>
            <person name="Sheng H.-H."/>
            <person name="Yin H.-F."/>
            <person name="Zhang Y."/>
            <person name="Zhu G.-F."/>
            <person name="Wan M."/>
            <person name="Huang H.-L."/>
            <person name="Qian Z."/>
            <person name="Wang S.-Y."/>
            <person name="Ma W."/>
            <person name="Yao Z.-J."/>
            <person name="Shen Y."/>
            <person name="Qiang B.-Q."/>
            <person name="Xia Q.-C."/>
            <person name="Guo X.-K."/>
            <person name="Danchin A."/>
            <person name="Saint Girons I."/>
            <person name="Somerville R.L."/>
            <person name="Wen Y.-M."/>
            <person name="Shi M.-H."/>
            <person name="Chen Z."/>
            <person name="Xu J.-G."/>
            <person name="Zhao G.-P."/>
        </authorList>
    </citation>
    <scope>NUCLEOTIDE SEQUENCE [LARGE SCALE GENOMIC DNA]</scope>
    <source>
        <strain>56601</strain>
    </source>
</reference>
<name>OBG_LEPIN</name>
<sequence>MESFVDEVAIEVFAGHGGAGSVHFRREKYVEFGGPDGGDGGIGGNVVIRPNLSMYTLDKYLSKRKFKAQAGFPGVGDNCSGKKGEDLVLFVPLGTQIYDEETGDLLFDFVSDSQEFVVARGGRGGKGNAHFKTSTNQTPRFAQPGEEGEYKFLRLSLKLLADVGIVGLPNAGKSTLISKITDAHPKIAGYAFTTLSPNLGVVKRRGDIFRFTIADIPGIIEGASMGIGLGLSFLRHIERVKGILYLFDASSLDIEEDLKMLRNELSTYNPELLNRPYLIVLNKIDIWNDPEFTKDVIAKVSHLGKVVAISADQEVNLEELLENMDEVFFKNEIEKILNPIKDTKPISLDESDIFES</sequence>
<keyword id="KW-0963">Cytoplasm</keyword>
<keyword id="KW-0342">GTP-binding</keyword>
<keyword id="KW-0378">Hydrolase</keyword>
<keyword id="KW-0460">Magnesium</keyword>
<keyword id="KW-0479">Metal-binding</keyword>
<keyword id="KW-0547">Nucleotide-binding</keyword>
<keyword id="KW-1185">Reference proteome</keyword>
<organism>
    <name type="scientific">Leptospira interrogans serogroup Icterohaemorrhagiae serovar Lai (strain 56601)</name>
    <dbReference type="NCBI Taxonomy" id="189518"/>
    <lineage>
        <taxon>Bacteria</taxon>
        <taxon>Pseudomonadati</taxon>
        <taxon>Spirochaetota</taxon>
        <taxon>Spirochaetia</taxon>
        <taxon>Leptospirales</taxon>
        <taxon>Leptospiraceae</taxon>
        <taxon>Leptospira</taxon>
    </lineage>
</organism>
<gene>
    <name evidence="1" type="primary">obg</name>
    <name type="ordered locus">LA_0852</name>
</gene>
<proteinExistence type="inferred from homology"/>
<evidence type="ECO:0000255" key="1">
    <source>
        <dbReference type="HAMAP-Rule" id="MF_01454"/>
    </source>
</evidence>
<evidence type="ECO:0000255" key="2">
    <source>
        <dbReference type="PROSITE-ProRule" id="PRU01231"/>
    </source>
</evidence>
<comment type="function">
    <text evidence="1">An essential GTPase which binds GTP, GDP and possibly (p)ppGpp with moderate affinity, with high nucleotide exchange rates and a fairly low GTP hydrolysis rate. Plays a role in control of the cell cycle, stress response, ribosome biogenesis and in those bacteria that undergo differentiation, in morphogenesis control.</text>
</comment>
<comment type="cofactor">
    <cofactor evidence="1">
        <name>Mg(2+)</name>
        <dbReference type="ChEBI" id="CHEBI:18420"/>
    </cofactor>
</comment>
<comment type="subunit">
    <text evidence="1">Monomer.</text>
</comment>
<comment type="subcellular location">
    <subcellularLocation>
        <location evidence="1">Cytoplasm</location>
    </subcellularLocation>
</comment>
<comment type="similarity">
    <text evidence="1">Belongs to the TRAFAC class OBG-HflX-like GTPase superfamily. OBG GTPase family.</text>
</comment>
<feature type="chain" id="PRO_0000386017" description="GTPase Obg">
    <location>
        <begin position="1"/>
        <end position="356"/>
    </location>
</feature>
<feature type="domain" description="Obg" evidence="2">
    <location>
        <begin position="2"/>
        <end position="160"/>
    </location>
</feature>
<feature type="domain" description="OBG-type G" evidence="1">
    <location>
        <begin position="161"/>
        <end position="329"/>
    </location>
</feature>
<feature type="binding site" evidence="1">
    <location>
        <begin position="167"/>
        <end position="174"/>
    </location>
    <ligand>
        <name>GTP</name>
        <dbReference type="ChEBI" id="CHEBI:37565"/>
    </ligand>
</feature>
<feature type="binding site" evidence="1">
    <location>
        <position position="174"/>
    </location>
    <ligand>
        <name>Mg(2+)</name>
        <dbReference type="ChEBI" id="CHEBI:18420"/>
    </ligand>
</feature>
<feature type="binding site" evidence="1">
    <location>
        <begin position="192"/>
        <end position="196"/>
    </location>
    <ligand>
        <name>GTP</name>
        <dbReference type="ChEBI" id="CHEBI:37565"/>
    </ligand>
</feature>
<feature type="binding site" evidence="1">
    <location>
        <position position="194"/>
    </location>
    <ligand>
        <name>Mg(2+)</name>
        <dbReference type="ChEBI" id="CHEBI:18420"/>
    </ligand>
</feature>
<feature type="binding site" evidence="1">
    <location>
        <begin position="215"/>
        <end position="218"/>
    </location>
    <ligand>
        <name>GTP</name>
        <dbReference type="ChEBI" id="CHEBI:37565"/>
    </ligand>
</feature>
<feature type="binding site" evidence="1">
    <location>
        <begin position="282"/>
        <end position="285"/>
    </location>
    <ligand>
        <name>GTP</name>
        <dbReference type="ChEBI" id="CHEBI:37565"/>
    </ligand>
</feature>
<feature type="binding site" evidence="1">
    <location>
        <begin position="310"/>
        <end position="312"/>
    </location>
    <ligand>
        <name>GTP</name>
        <dbReference type="ChEBI" id="CHEBI:37565"/>
    </ligand>
</feature>
<accession>Q8F7U0</accession>
<protein>
    <recommendedName>
        <fullName evidence="1">GTPase Obg</fullName>
        <ecNumber evidence="1">3.6.5.-</ecNumber>
    </recommendedName>
    <alternativeName>
        <fullName evidence="1">GTP-binding protein Obg</fullName>
    </alternativeName>
</protein>
<dbReference type="EC" id="3.6.5.-" evidence="1"/>
<dbReference type="EMBL" id="AE010300">
    <property type="protein sequence ID" value="AAN48051.1"/>
    <property type="molecule type" value="Genomic_DNA"/>
</dbReference>
<dbReference type="RefSeq" id="NP_711033.1">
    <property type="nucleotide sequence ID" value="NC_004342.2"/>
</dbReference>
<dbReference type="SMR" id="Q8F7U0"/>
<dbReference type="FunCoup" id="Q8F7U0">
    <property type="interactions" value="477"/>
</dbReference>
<dbReference type="STRING" id="189518.LA_0852"/>
<dbReference type="PaxDb" id="189518-LA_0852"/>
<dbReference type="EnsemblBacteria" id="AAN48051">
    <property type="protein sequence ID" value="AAN48051"/>
    <property type="gene ID" value="LA_0852"/>
</dbReference>
<dbReference type="KEGG" id="lil:LA_0852"/>
<dbReference type="PATRIC" id="fig|189518.3.peg.856"/>
<dbReference type="HOGENOM" id="CLU_011747_2_0_12"/>
<dbReference type="InParanoid" id="Q8F7U0"/>
<dbReference type="OrthoDB" id="9807318at2"/>
<dbReference type="Proteomes" id="UP000001408">
    <property type="component" value="Chromosome I"/>
</dbReference>
<dbReference type="GO" id="GO:0005737">
    <property type="term" value="C:cytoplasm"/>
    <property type="evidence" value="ECO:0007669"/>
    <property type="project" value="UniProtKB-SubCell"/>
</dbReference>
<dbReference type="GO" id="GO:0005525">
    <property type="term" value="F:GTP binding"/>
    <property type="evidence" value="ECO:0000318"/>
    <property type="project" value="GO_Central"/>
</dbReference>
<dbReference type="GO" id="GO:0003924">
    <property type="term" value="F:GTPase activity"/>
    <property type="evidence" value="ECO:0000318"/>
    <property type="project" value="GO_Central"/>
</dbReference>
<dbReference type="GO" id="GO:0000287">
    <property type="term" value="F:magnesium ion binding"/>
    <property type="evidence" value="ECO:0007669"/>
    <property type="project" value="InterPro"/>
</dbReference>
<dbReference type="GO" id="GO:0042254">
    <property type="term" value="P:ribosome biogenesis"/>
    <property type="evidence" value="ECO:0007669"/>
    <property type="project" value="UniProtKB-UniRule"/>
</dbReference>
<dbReference type="CDD" id="cd01898">
    <property type="entry name" value="Obg"/>
    <property type="match status" value="1"/>
</dbReference>
<dbReference type="FunFam" id="2.70.210.12:FF:000001">
    <property type="entry name" value="GTPase Obg"/>
    <property type="match status" value="1"/>
</dbReference>
<dbReference type="Gene3D" id="2.70.210.12">
    <property type="entry name" value="GTP1/OBG domain"/>
    <property type="match status" value="1"/>
</dbReference>
<dbReference type="Gene3D" id="3.40.50.300">
    <property type="entry name" value="P-loop containing nucleotide triphosphate hydrolases"/>
    <property type="match status" value="1"/>
</dbReference>
<dbReference type="HAMAP" id="MF_01454">
    <property type="entry name" value="GTPase_Obg"/>
    <property type="match status" value="1"/>
</dbReference>
<dbReference type="InterPro" id="IPR031167">
    <property type="entry name" value="G_OBG"/>
</dbReference>
<dbReference type="InterPro" id="IPR006073">
    <property type="entry name" value="GTP-bd"/>
</dbReference>
<dbReference type="InterPro" id="IPR014100">
    <property type="entry name" value="GTP-bd_Obg/CgtA"/>
</dbReference>
<dbReference type="InterPro" id="IPR006074">
    <property type="entry name" value="GTP1-OBG_CS"/>
</dbReference>
<dbReference type="InterPro" id="IPR006169">
    <property type="entry name" value="GTP1_OBG_dom"/>
</dbReference>
<dbReference type="InterPro" id="IPR036726">
    <property type="entry name" value="GTP1_OBG_dom_sf"/>
</dbReference>
<dbReference type="InterPro" id="IPR045086">
    <property type="entry name" value="OBG_GTPase"/>
</dbReference>
<dbReference type="InterPro" id="IPR027417">
    <property type="entry name" value="P-loop_NTPase"/>
</dbReference>
<dbReference type="InterPro" id="IPR005225">
    <property type="entry name" value="Small_GTP-bd"/>
</dbReference>
<dbReference type="NCBIfam" id="TIGR02729">
    <property type="entry name" value="Obg_CgtA"/>
    <property type="match status" value="1"/>
</dbReference>
<dbReference type="NCBIfam" id="NF008955">
    <property type="entry name" value="PRK12297.1"/>
    <property type="match status" value="1"/>
</dbReference>
<dbReference type="NCBIfam" id="NF008956">
    <property type="entry name" value="PRK12299.1"/>
    <property type="match status" value="1"/>
</dbReference>
<dbReference type="NCBIfam" id="TIGR00231">
    <property type="entry name" value="small_GTP"/>
    <property type="match status" value="1"/>
</dbReference>
<dbReference type="PANTHER" id="PTHR11702">
    <property type="entry name" value="DEVELOPMENTALLY REGULATED GTP-BINDING PROTEIN-RELATED"/>
    <property type="match status" value="1"/>
</dbReference>
<dbReference type="PANTHER" id="PTHR11702:SF31">
    <property type="entry name" value="MITOCHONDRIAL RIBOSOME-ASSOCIATED GTPASE 2"/>
    <property type="match status" value="1"/>
</dbReference>
<dbReference type="Pfam" id="PF01018">
    <property type="entry name" value="GTP1_OBG"/>
    <property type="match status" value="1"/>
</dbReference>
<dbReference type="Pfam" id="PF01926">
    <property type="entry name" value="MMR_HSR1"/>
    <property type="match status" value="1"/>
</dbReference>
<dbReference type="PIRSF" id="PIRSF002401">
    <property type="entry name" value="GTP_bd_Obg/CgtA"/>
    <property type="match status" value="1"/>
</dbReference>
<dbReference type="PRINTS" id="PR00326">
    <property type="entry name" value="GTP1OBG"/>
</dbReference>
<dbReference type="SUPFAM" id="SSF82051">
    <property type="entry name" value="Obg GTP-binding protein N-terminal domain"/>
    <property type="match status" value="1"/>
</dbReference>
<dbReference type="SUPFAM" id="SSF52540">
    <property type="entry name" value="P-loop containing nucleoside triphosphate hydrolases"/>
    <property type="match status" value="1"/>
</dbReference>
<dbReference type="PROSITE" id="PS51710">
    <property type="entry name" value="G_OBG"/>
    <property type="match status" value="1"/>
</dbReference>
<dbReference type="PROSITE" id="PS00905">
    <property type="entry name" value="GTP1_OBG"/>
    <property type="match status" value="1"/>
</dbReference>
<dbReference type="PROSITE" id="PS51883">
    <property type="entry name" value="OBG"/>
    <property type="match status" value="1"/>
</dbReference>